<reference key="1">
    <citation type="journal article" date="2005" name="Nucleic Acids Res.">
        <title>The genome sequence of Salmonella enterica serovar Choleraesuis, a highly invasive and resistant zoonotic pathogen.</title>
        <authorList>
            <person name="Chiu C.-H."/>
            <person name="Tang P."/>
            <person name="Chu C."/>
            <person name="Hu S."/>
            <person name="Bao Q."/>
            <person name="Yu J."/>
            <person name="Chou Y.-Y."/>
            <person name="Wang H.-S."/>
            <person name="Lee Y.-S."/>
        </authorList>
    </citation>
    <scope>NUCLEOTIDE SEQUENCE [LARGE SCALE GENOMIC DNA]</scope>
    <source>
        <strain>SC-B67</strain>
    </source>
</reference>
<accession>Q57S79</accession>
<dbReference type="EMBL" id="AE017220">
    <property type="protein sequence ID" value="AAX64432.1"/>
    <property type="molecule type" value="Genomic_DNA"/>
</dbReference>
<dbReference type="RefSeq" id="WP_000467098.1">
    <property type="nucleotide sequence ID" value="NC_006905.1"/>
</dbReference>
<dbReference type="SMR" id="Q57S79"/>
<dbReference type="KEGG" id="sec:SCH_0526"/>
<dbReference type="HOGENOM" id="CLU_140930_0_0_6"/>
<dbReference type="Proteomes" id="UP000000538">
    <property type="component" value="Chromosome"/>
</dbReference>
<dbReference type="GO" id="GO:0043590">
    <property type="term" value="C:bacterial nucleoid"/>
    <property type="evidence" value="ECO:0007669"/>
    <property type="project" value="UniProtKB-UniRule"/>
</dbReference>
<dbReference type="GO" id="GO:0005829">
    <property type="term" value="C:cytosol"/>
    <property type="evidence" value="ECO:0007669"/>
    <property type="project" value="TreeGrafter"/>
</dbReference>
<dbReference type="GO" id="GO:0003677">
    <property type="term" value="F:DNA binding"/>
    <property type="evidence" value="ECO:0007669"/>
    <property type="project" value="UniProtKB-UniRule"/>
</dbReference>
<dbReference type="FunFam" id="3.30.1310.10:FF:000001">
    <property type="entry name" value="Nucleoid-associated protein YbaB"/>
    <property type="match status" value="1"/>
</dbReference>
<dbReference type="Gene3D" id="3.30.1310.10">
    <property type="entry name" value="Nucleoid-associated protein YbaB-like domain"/>
    <property type="match status" value="1"/>
</dbReference>
<dbReference type="HAMAP" id="MF_00274">
    <property type="entry name" value="DNA_YbaB_EbfC"/>
    <property type="match status" value="1"/>
</dbReference>
<dbReference type="InterPro" id="IPR036894">
    <property type="entry name" value="YbaB-like_sf"/>
</dbReference>
<dbReference type="InterPro" id="IPR004401">
    <property type="entry name" value="YbaB/EbfC"/>
</dbReference>
<dbReference type="NCBIfam" id="TIGR00103">
    <property type="entry name" value="DNA_YbaB_EbfC"/>
    <property type="match status" value="1"/>
</dbReference>
<dbReference type="PANTHER" id="PTHR33449">
    <property type="entry name" value="NUCLEOID-ASSOCIATED PROTEIN YBAB"/>
    <property type="match status" value="1"/>
</dbReference>
<dbReference type="PANTHER" id="PTHR33449:SF1">
    <property type="entry name" value="NUCLEOID-ASSOCIATED PROTEIN YBAB"/>
    <property type="match status" value="1"/>
</dbReference>
<dbReference type="Pfam" id="PF02575">
    <property type="entry name" value="YbaB_DNA_bd"/>
    <property type="match status" value="1"/>
</dbReference>
<dbReference type="PIRSF" id="PIRSF004555">
    <property type="entry name" value="UCP004555"/>
    <property type="match status" value="1"/>
</dbReference>
<dbReference type="SUPFAM" id="SSF82607">
    <property type="entry name" value="YbaB-like"/>
    <property type="match status" value="1"/>
</dbReference>
<proteinExistence type="inferred from homology"/>
<feature type="chain" id="PRO_1000003817" description="Nucleoid-associated protein YbaB">
    <location>
        <begin position="1"/>
        <end position="109"/>
    </location>
</feature>
<comment type="function">
    <text evidence="1">Binds to DNA and alters its conformation. May be involved in regulation of gene expression, nucleoid organization and DNA protection.</text>
</comment>
<comment type="subunit">
    <text evidence="1">Homodimer.</text>
</comment>
<comment type="subcellular location">
    <subcellularLocation>
        <location evidence="1">Cytoplasm</location>
        <location evidence="1">Nucleoid</location>
    </subcellularLocation>
</comment>
<comment type="similarity">
    <text evidence="1">Belongs to the YbaB/EbfC family.</text>
</comment>
<evidence type="ECO:0000255" key="1">
    <source>
        <dbReference type="HAMAP-Rule" id="MF_00274"/>
    </source>
</evidence>
<organism>
    <name type="scientific">Salmonella choleraesuis (strain SC-B67)</name>
    <dbReference type="NCBI Taxonomy" id="321314"/>
    <lineage>
        <taxon>Bacteria</taxon>
        <taxon>Pseudomonadati</taxon>
        <taxon>Pseudomonadota</taxon>
        <taxon>Gammaproteobacteria</taxon>
        <taxon>Enterobacterales</taxon>
        <taxon>Enterobacteriaceae</taxon>
        <taxon>Salmonella</taxon>
    </lineage>
</organism>
<name>YBAB_SALCH</name>
<protein>
    <recommendedName>
        <fullName evidence="1">Nucleoid-associated protein YbaB</fullName>
    </recommendedName>
</protein>
<keyword id="KW-0963">Cytoplasm</keyword>
<keyword id="KW-0238">DNA-binding</keyword>
<gene>
    <name evidence="1" type="primary">ybaB</name>
    <name type="ordered locus">SCH_0526</name>
</gene>
<sequence>MFGKGGLGNLMKQAQQMQEKMQKMQEEIAQLEVTGESGAGLVKVTINGAHNCRRVEIDPSLLEDDKEMLEDLVAAAFNDAARRIEETQKEKMASVSSGMQLPPGFKMPF</sequence>